<dbReference type="EC" id="2.4.2.17" evidence="3"/>
<dbReference type="EMBL" id="X83871">
    <property type="protein sequence ID" value="CAA58751.1"/>
    <property type="molecule type" value="Genomic_DNA"/>
</dbReference>
<dbReference type="EMBL" id="CP017627">
    <property type="protein sequence ID" value="AOW29936.1"/>
    <property type="molecule type" value="Genomic_DNA"/>
</dbReference>
<dbReference type="PIR" id="S55497">
    <property type="entry name" value="S55497"/>
</dbReference>
<dbReference type="RefSeq" id="XP_721934.1">
    <property type="nucleotide sequence ID" value="XM_716841.1"/>
</dbReference>
<dbReference type="SMR" id="P46586"/>
<dbReference type="FunCoup" id="P46586">
    <property type="interactions" value="214"/>
</dbReference>
<dbReference type="STRING" id="237561.P46586"/>
<dbReference type="EnsemblFungi" id="C5_05320C_A-T">
    <property type="protein sequence ID" value="C5_05320C_A-T-p1"/>
    <property type="gene ID" value="C5_05320C_A"/>
</dbReference>
<dbReference type="GeneID" id="3636501"/>
<dbReference type="KEGG" id="cal:CAALFM_C505320CA"/>
<dbReference type="CGD" id="CAL0000180598">
    <property type="gene designation" value="HIS1"/>
</dbReference>
<dbReference type="VEuPathDB" id="FungiDB:C5_05320C_A"/>
<dbReference type="eggNOG" id="KOG2831">
    <property type="taxonomic scope" value="Eukaryota"/>
</dbReference>
<dbReference type="HOGENOM" id="CLU_038115_1_2_1"/>
<dbReference type="InParanoid" id="P46586"/>
<dbReference type="OMA" id="YVMMDYD"/>
<dbReference type="OrthoDB" id="2574at2759"/>
<dbReference type="UniPathway" id="UPA00031">
    <property type="reaction ID" value="UER00006"/>
</dbReference>
<dbReference type="PRO" id="PR:P46586"/>
<dbReference type="Proteomes" id="UP000000559">
    <property type="component" value="Chromosome 5"/>
</dbReference>
<dbReference type="GO" id="GO:0005737">
    <property type="term" value="C:cytoplasm"/>
    <property type="evidence" value="ECO:0007669"/>
    <property type="project" value="UniProtKB-SubCell"/>
</dbReference>
<dbReference type="GO" id="GO:0005524">
    <property type="term" value="F:ATP binding"/>
    <property type="evidence" value="ECO:0007669"/>
    <property type="project" value="UniProtKB-KW"/>
</dbReference>
<dbReference type="GO" id="GO:0003879">
    <property type="term" value="F:ATP phosphoribosyltransferase activity"/>
    <property type="evidence" value="ECO:0000316"/>
    <property type="project" value="CGD"/>
</dbReference>
<dbReference type="GO" id="GO:0000287">
    <property type="term" value="F:magnesium ion binding"/>
    <property type="evidence" value="ECO:0007669"/>
    <property type="project" value="InterPro"/>
</dbReference>
<dbReference type="GO" id="GO:0000105">
    <property type="term" value="P:L-histidine biosynthetic process"/>
    <property type="evidence" value="ECO:0000315"/>
    <property type="project" value="CGD"/>
</dbReference>
<dbReference type="FunFam" id="3.30.70.120:FF:000003">
    <property type="entry name" value="ATP phosphoribosyltransferase"/>
    <property type="match status" value="1"/>
</dbReference>
<dbReference type="FunFam" id="3.40.190.10:FF:000123">
    <property type="entry name" value="HIS1p ATP phosphoribosyltransferase"/>
    <property type="match status" value="1"/>
</dbReference>
<dbReference type="Gene3D" id="3.30.70.120">
    <property type="match status" value="1"/>
</dbReference>
<dbReference type="Gene3D" id="3.40.190.10">
    <property type="entry name" value="Periplasmic binding protein-like II"/>
    <property type="match status" value="2"/>
</dbReference>
<dbReference type="HAMAP" id="MF_00079">
    <property type="entry name" value="HisG_Long"/>
    <property type="match status" value="1"/>
</dbReference>
<dbReference type="InterPro" id="IPR020621">
    <property type="entry name" value="ATP-PRT_HisG_long"/>
</dbReference>
<dbReference type="InterPro" id="IPR013820">
    <property type="entry name" value="ATP_PRibTrfase_cat"/>
</dbReference>
<dbReference type="InterPro" id="IPR018198">
    <property type="entry name" value="ATP_PRibTrfase_CS"/>
</dbReference>
<dbReference type="InterPro" id="IPR001348">
    <property type="entry name" value="ATP_PRibTrfase_HisG"/>
</dbReference>
<dbReference type="InterPro" id="IPR013115">
    <property type="entry name" value="HisG_C"/>
</dbReference>
<dbReference type="InterPro" id="IPR011322">
    <property type="entry name" value="N-reg_PII-like_a/b"/>
</dbReference>
<dbReference type="InterPro" id="IPR015867">
    <property type="entry name" value="N-reg_PII/ATP_PRibTrfase_C"/>
</dbReference>
<dbReference type="NCBIfam" id="TIGR00070">
    <property type="entry name" value="hisG"/>
    <property type="match status" value="1"/>
</dbReference>
<dbReference type="NCBIfam" id="TIGR03455">
    <property type="entry name" value="HisG_C-term"/>
    <property type="match status" value="1"/>
</dbReference>
<dbReference type="PANTHER" id="PTHR21403:SF8">
    <property type="entry name" value="ATP PHOSPHORIBOSYLTRANSFERASE"/>
    <property type="match status" value="1"/>
</dbReference>
<dbReference type="PANTHER" id="PTHR21403">
    <property type="entry name" value="ATP PHOSPHORIBOSYLTRANSFERASE ATP-PRTASE"/>
    <property type="match status" value="1"/>
</dbReference>
<dbReference type="Pfam" id="PF01634">
    <property type="entry name" value="HisG"/>
    <property type="match status" value="1"/>
</dbReference>
<dbReference type="Pfam" id="PF08029">
    <property type="entry name" value="HisG_C"/>
    <property type="match status" value="1"/>
</dbReference>
<dbReference type="SUPFAM" id="SSF54913">
    <property type="entry name" value="GlnB-like"/>
    <property type="match status" value="1"/>
</dbReference>
<dbReference type="SUPFAM" id="SSF53850">
    <property type="entry name" value="Periplasmic binding protein-like II"/>
    <property type="match status" value="1"/>
</dbReference>
<dbReference type="PROSITE" id="PS01316">
    <property type="entry name" value="ATP_P_PHORIBOSYLTR"/>
    <property type="match status" value="1"/>
</dbReference>
<reference key="1">
    <citation type="journal article" date="1995" name="Gene">
        <title>Cloning of the Candida albicans HIS1 gene by direct complementation of a C. albicans histidine auxotroph using an improved double-ARS shuttle vector.</title>
        <authorList>
            <person name="Pla J."/>
            <person name="Perez-Diaz R.M."/>
            <person name="Navarro-Garcia F."/>
            <person name="Sanchez M."/>
            <person name="Nombela C."/>
        </authorList>
    </citation>
    <scope>NUCLEOTIDE SEQUENCE [GENOMIC DNA]</scope>
    <scope>CATALYTIC ACTIVITY</scope>
    <source>
        <strain>ATCC 64385 / 1001</strain>
    </source>
</reference>
<reference key="2">
    <citation type="journal article" date="2004" name="Proc. Natl. Acad. Sci. U.S.A.">
        <title>The diploid genome sequence of Candida albicans.</title>
        <authorList>
            <person name="Jones T."/>
            <person name="Federspiel N.A."/>
            <person name="Chibana H."/>
            <person name="Dungan J."/>
            <person name="Kalman S."/>
            <person name="Magee B.B."/>
            <person name="Newport G."/>
            <person name="Thorstenson Y.R."/>
            <person name="Agabian N."/>
            <person name="Magee P.T."/>
            <person name="Davis R.W."/>
            <person name="Scherer S."/>
        </authorList>
    </citation>
    <scope>NUCLEOTIDE SEQUENCE [LARGE SCALE GENOMIC DNA]</scope>
    <source>
        <strain>SC5314 / ATCC MYA-2876</strain>
    </source>
</reference>
<reference key="3">
    <citation type="journal article" date="2007" name="Genome Biol.">
        <title>Assembly of the Candida albicans genome into sixteen supercontigs aligned on the eight chromosomes.</title>
        <authorList>
            <person name="van het Hoog M."/>
            <person name="Rast T.J."/>
            <person name="Martchenko M."/>
            <person name="Grindle S."/>
            <person name="Dignard D."/>
            <person name="Hogues H."/>
            <person name="Cuomo C."/>
            <person name="Berriman M."/>
            <person name="Scherer S."/>
            <person name="Magee B.B."/>
            <person name="Whiteway M."/>
            <person name="Chibana H."/>
            <person name="Nantel A."/>
            <person name="Magee P.T."/>
        </authorList>
    </citation>
    <scope>GENOME REANNOTATION</scope>
    <source>
        <strain>SC5314 / ATCC MYA-2876</strain>
    </source>
</reference>
<reference key="4">
    <citation type="journal article" date="2013" name="Genome Biol.">
        <title>Assembly of a phased diploid Candida albicans genome facilitates allele-specific measurements and provides a simple model for repeat and indel structure.</title>
        <authorList>
            <person name="Muzzey D."/>
            <person name="Schwartz K."/>
            <person name="Weissman J.S."/>
            <person name="Sherlock G."/>
        </authorList>
    </citation>
    <scope>NUCLEOTIDE SEQUENCE [LARGE SCALE GENOMIC DNA]</scope>
    <scope>GENOME REANNOTATION</scope>
    <source>
        <strain>SC5314 / ATCC MYA-2876</strain>
    </source>
</reference>
<sequence>MDLVNHLPDRLLFAVPKKGRLYEKCCNLLSGADIQFRRSNRLDIALSTNLPIALIFLPAADIPVFVGEGNCDLGITGLDQIKEAEQFDNIEDLLDLKFGSCKLQIQVPADGEYEKPEQLVGKKIVSSFTKLSTDYFKQLSDKPTNIRYVGGSVEASCALGVADAIVDLVESGETMKAAGLKAIETILETSAHLISSKKSKFPEMVNIIVQRLQGVLAAQEYVLCNYNAPKSIQAKCLTITPGRRAATVSTLDKHSDDEEDWVAISSMVNRKEIGNVMDELKKAGATDILVLEISNCRV</sequence>
<feature type="chain" id="PRO_0000151952" description="ATP phosphoribosyltransferase">
    <location>
        <begin position="1"/>
        <end position="298"/>
    </location>
</feature>
<name>HIS1_CANAL</name>
<proteinExistence type="evidence at protein level"/>
<accession>P46586</accession>
<accession>A0A1D8PP88</accession>
<accession>Q5AJZ4</accession>
<gene>
    <name type="primary">HIS1</name>
    <name type="ordered locus">CAALFM_C505320CA</name>
    <name type="ORF">CaO19.11509</name>
    <name type="ORF">CaO19.4026</name>
</gene>
<protein>
    <recommendedName>
        <fullName>ATP phosphoribosyltransferase</fullName>
        <shortName>ATP-PRT</shortName>
        <shortName>ATP-PRTase</shortName>
        <ecNumber evidence="3">2.4.2.17</ecNumber>
    </recommendedName>
</protein>
<evidence type="ECO:0000250" key="1"/>
<evidence type="ECO:0000305" key="2"/>
<evidence type="ECO:0000305" key="3">
    <source>
    </source>
</evidence>
<keyword id="KW-0028">Amino-acid biosynthesis</keyword>
<keyword id="KW-0067">ATP-binding</keyword>
<keyword id="KW-0963">Cytoplasm</keyword>
<keyword id="KW-0328">Glycosyltransferase</keyword>
<keyword id="KW-0368">Histidine biosynthesis</keyword>
<keyword id="KW-0547">Nucleotide-binding</keyword>
<keyword id="KW-1185">Reference proteome</keyword>
<keyword id="KW-0808">Transferase</keyword>
<comment type="function">
    <text evidence="1">Catalyzes the condensation of ATP and 5-phosphoribose 1-diphosphate to form N'-(5'-phosphoribosyl)-ATP (PR-ATP). Has a crucial role in the pathway because the rate of histidine biosynthesis seems to be controlled primarily by regulation of the enzymatic activity (By similarity).</text>
</comment>
<comment type="catalytic activity">
    <reaction evidence="3">
        <text>1-(5-phospho-beta-D-ribosyl)-ATP + diphosphate = 5-phospho-alpha-D-ribose 1-diphosphate + ATP</text>
        <dbReference type="Rhea" id="RHEA:18473"/>
        <dbReference type="ChEBI" id="CHEBI:30616"/>
        <dbReference type="ChEBI" id="CHEBI:33019"/>
        <dbReference type="ChEBI" id="CHEBI:58017"/>
        <dbReference type="ChEBI" id="CHEBI:73183"/>
        <dbReference type="EC" id="2.4.2.17"/>
    </reaction>
</comment>
<comment type="pathway">
    <text>Amino-acid biosynthesis; L-histidine biosynthesis; L-histidine from 5-phospho-alpha-D-ribose 1-diphosphate: step 1/9.</text>
</comment>
<comment type="subcellular location">
    <subcellularLocation>
        <location evidence="1">Cytoplasm</location>
    </subcellularLocation>
</comment>
<comment type="similarity">
    <text evidence="2">Belongs to the ATP phosphoribosyltransferase family.</text>
</comment>
<organism>
    <name type="scientific">Candida albicans (strain SC5314 / ATCC MYA-2876)</name>
    <name type="common">Yeast</name>
    <dbReference type="NCBI Taxonomy" id="237561"/>
    <lineage>
        <taxon>Eukaryota</taxon>
        <taxon>Fungi</taxon>
        <taxon>Dikarya</taxon>
        <taxon>Ascomycota</taxon>
        <taxon>Saccharomycotina</taxon>
        <taxon>Pichiomycetes</taxon>
        <taxon>Debaryomycetaceae</taxon>
        <taxon>Candida/Lodderomyces clade</taxon>
        <taxon>Candida</taxon>
    </lineage>
</organism>